<dbReference type="SMR" id="P83212"/>
<dbReference type="GO" id="GO:0000786">
    <property type="term" value="C:nucleosome"/>
    <property type="evidence" value="ECO:0007669"/>
    <property type="project" value="UniProtKB-KW"/>
</dbReference>
<dbReference type="GO" id="GO:0005634">
    <property type="term" value="C:nucleus"/>
    <property type="evidence" value="ECO:0007669"/>
    <property type="project" value="UniProtKB-SubCell"/>
</dbReference>
<dbReference type="GO" id="GO:0003677">
    <property type="term" value="F:DNA binding"/>
    <property type="evidence" value="ECO:0007669"/>
    <property type="project" value="UniProtKB-KW"/>
</dbReference>
<dbReference type="GO" id="GO:0030154">
    <property type="term" value="P:cell differentiation"/>
    <property type="evidence" value="ECO:0007669"/>
    <property type="project" value="UniProtKB-KW"/>
</dbReference>
<dbReference type="GO" id="GO:0030261">
    <property type="term" value="P:chromosome condensation"/>
    <property type="evidence" value="ECO:0007669"/>
    <property type="project" value="UniProtKB-KW"/>
</dbReference>
<dbReference type="GO" id="GO:0007283">
    <property type="term" value="P:spermatogenesis"/>
    <property type="evidence" value="ECO:0007669"/>
    <property type="project" value="UniProtKB-KW"/>
</dbReference>
<name>HSP2_BOLBR</name>
<accession>P83212</accession>
<reference evidence="3" key="1">
    <citation type="journal article" date="1999" name="J. Biol. Chem.">
        <title>DNA-interacting proteins in the spermiogenesis of the mollusc Murex brandaris.</title>
        <authorList>
            <person name="Caceres C."/>
            <person name="Gimenez-Bonafe P."/>
            <person name="Ribes E."/>
            <person name="Wouters-Tyrou D."/>
            <person name="Martinage A."/>
            <person name="Kouach M."/>
            <person name="Sautiere P."/>
            <person name="Muller S."/>
            <person name="Palau J."/>
            <person name="Subirana J.A."/>
            <person name="Cornudella L."/>
            <person name="Chiva M."/>
        </authorList>
    </citation>
    <scope>PROTEIN SEQUENCE</scope>
    <scope>FUNCTION</scope>
    <scope>SUBCELLULAR LOCATION</scope>
    <scope>MASS SPECTROMETRY</scope>
    <source>
        <tissue>Gonad</tissue>
        <tissue>Sperm</tissue>
    </source>
</reference>
<organism evidence="3">
    <name type="scientific">Bolinus brandaris</name>
    <name type="common">Purple dye murex</name>
    <name type="synonym">Murex brandaris</name>
    <dbReference type="NCBI Taxonomy" id="179646"/>
    <lineage>
        <taxon>Eukaryota</taxon>
        <taxon>Metazoa</taxon>
        <taxon>Spiralia</taxon>
        <taxon>Lophotrochozoa</taxon>
        <taxon>Mollusca</taxon>
        <taxon>Gastropoda</taxon>
        <taxon>Caenogastropoda</taxon>
        <taxon>Neogastropoda</taxon>
        <taxon>Muricoidea</taxon>
        <taxon>Muricidae</taxon>
        <taxon>Bolinus</taxon>
    </lineage>
</organism>
<keyword id="KW-0158">Chromosome</keyword>
<keyword id="KW-0217">Developmental protein</keyword>
<keyword id="KW-0221">Differentiation</keyword>
<keyword id="KW-0903">Direct protein sequencing</keyword>
<keyword id="KW-0226">DNA condensation</keyword>
<keyword id="KW-0238">DNA-binding</keyword>
<keyword id="KW-0544">Nucleosome core</keyword>
<keyword id="KW-0539">Nucleus</keyword>
<keyword id="KW-0744">Spermatogenesis</keyword>
<feature type="chain" id="PRO_0000106641" description="Sperm protamine P2">
    <location>
        <begin position="1"/>
        <end position="58"/>
    </location>
</feature>
<feature type="region of interest" description="Disordered" evidence="1">
    <location>
        <begin position="1"/>
        <end position="58"/>
    </location>
</feature>
<comment type="function">
    <text evidence="2">Protamines substitute for histones in the chromatin of sperm during the haploid phase of spermatogenesis. They compact sperm DNA into a highly condensed, stable and inactive complex.</text>
</comment>
<comment type="subcellular location">
    <subcellularLocation>
        <location evidence="2">Nucleus</location>
    </subcellularLocation>
    <subcellularLocation>
        <location evidence="2">Chromosome</location>
    </subcellularLocation>
</comment>
<comment type="tissue specificity">
    <text evidence="2">Gonads.</text>
</comment>
<comment type="mass spectrometry" mass="6962.0" method="Electrospray" evidence="2"/>
<proteinExistence type="evidence at protein level"/>
<sequence length="58" mass="6962">RRRRRRGKGRGKKRKGKGKKRGKGRRRGSKGRKKKKGKGKKRKRRRRRRRKGSKGKGK</sequence>
<evidence type="ECO:0000256" key="1">
    <source>
        <dbReference type="SAM" id="MobiDB-lite"/>
    </source>
</evidence>
<evidence type="ECO:0000269" key="2">
    <source>
    </source>
</evidence>
<evidence type="ECO:0000305" key="3"/>
<protein>
    <recommendedName>
        <fullName>Sperm protamine P2</fullName>
    </recommendedName>
</protein>